<proteinExistence type="inferred from homology"/>
<feature type="chain" id="PRO_1000142321" description="Large ribosomal subunit protein uL22">
    <location>
        <begin position="1"/>
        <end position="111"/>
    </location>
</feature>
<keyword id="KW-1185">Reference proteome</keyword>
<keyword id="KW-0687">Ribonucleoprotein</keyword>
<keyword id="KW-0689">Ribosomal protein</keyword>
<keyword id="KW-0694">RNA-binding</keyword>
<keyword id="KW-0699">rRNA-binding</keyword>
<evidence type="ECO:0000255" key="1">
    <source>
        <dbReference type="HAMAP-Rule" id="MF_01331"/>
    </source>
</evidence>
<evidence type="ECO:0000305" key="2"/>
<organism>
    <name type="scientific">Thermoanaerobacter pseudethanolicus (strain ATCC 33223 / 39E)</name>
    <name type="common">Clostridium thermohydrosulfuricum</name>
    <dbReference type="NCBI Taxonomy" id="340099"/>
    <lineage>
        <taxon>Bacteria</taxon>
        <taxon>Bacillati</taxon>
        <taxon>Bacillota</taxon>
        <taxon>Clostridia</taxon>
        <taxon>Thermoanaerobacterales</taxon>
        <taxon>Thermoanaerobacteraceae</taxon>
        <taxon>Thermoanaerobacter</taxon>
    </lineage>
</organism>
<protein>
    <recommendedName>
        <fullName evidence="1">Large ribosomal subunit protein uL22</fullName>
    </recommendedName>
    <alternativeName>
        <fullName evidence="2">50S ribosomal protein L22</fullName>
    </alternativeName>
</protein>
<sequence>MEARAIARYVRISPRKVRLVLNLIRGKHVDEALTILRFTPKRASGIVAKVLKSAIANAENNHGMNRDNLYVAKAVADEGPTMKRVFPRAMGRADIMRKRTSHITIVVKEKE</sequence>
<comment type="function">
    <text evidence="1">This protein binds specifically to 23S rRNA; its binding is stimulated by other ribosomal proteins, e.g. L4, L17, and L20. It is important during the early stages of 50S assembly. It makes multiple contacts with different domains of the 23S rRNA in the assembled 50S subunit and ribosome (By similarity).</text>
</comment>
<comment type="function">
    <text evidence="1">The globular domain of the protein is located near the polypeptide exit tunnel on the outside of the subunit, while an extended beta-hairpin is found that lines the wall of the exit tunnel in the center of the 70S ribosome.</text>
</comment>
<comment type="subunit">
    <text evidence="1">Part of the 50S ribosomal subunit.</text>
</comment>
<comment type="similarity">
    <text evidence="1">Belongs to the universal ribosomal protein uL22 family.</text>
</comment>
<accession>B0KCK5</accession>
<reference key="1">
    <citation type="submission" date="2008-01" db="EMBL/GenBank/DDBJ databases">
        <title>Complete sequence of Thermoanaerobacter pseudethanolicus 39E.</title>
        <authorList>
            <person name="Copeland A."/>
            <person name="Lucas S."/>
            <person name="Lapidus A."/>
            <person name="Barry K."/>
            <person name="Glavina del Rio T."/>
            <person name="Dalin E."/>
            <person name="Tice H."/>
            <person name="Pitluck S."/>
            <person name="Bruce D."/>
            <person name="Goodwin L."/>
            <person name="Saunders E."/>
            <person name="Brettin T."/>
            <person name="Detter J.C."/>
            <person name="Han C."/>
            <person name="Schmutz J."/>
            <person name="Larimer F."/>
            <person name="Land M."/>
            <person name="Hauser L."/>
            <person name="Kyrpides N."/>
            <person name="Lykidis A."/>
            <person name="Hemme C."/>
            <person name="Fields M.W."/>
            <person name="He Z."/>
            <person name="Zhou J."/>
            <person name="Richardson P."/>
        </authorList>
    </citation>
    <scope>NUCLEOTIDE SEQUENCE [LARGE SCALE GENOMIC DNA]</scope>
    <source>
        <strain>ATCC 33223 / DSM 2355 / 39E</strain>
    </source>
</reference>
<gene>
    <name evidence="1" type="primary">rplV</name>
    <name type="ordered locus">Teth39_0379</name>
</gene>
<dbReference type="EMBL" id="CP000924">
    <property type="protein sequence ID" value="ABY94048.1"/>
    <property type="molecule type" value="Genomic_DNA"/>
</dbReference>
<dbReference type="RefSeq" id="WP_003868565.1">
    <property type="nucleotide sequence ID" value="NC_010321.1"/>
</dbReference>
<dbReference type="SMR" id="B0KCK5"/>
<dbReference type="STRING" id="340099.Teth39_0379"/>
<dbReference type="KEGG" id="tpd:Teth39_0379"/>
<dbReference type="eggNOG" id="COG0091">
    <property type="taxonomic scope" value="Bacteria"/>
</dbReference>
<dbReference type="HOGENOM" id="CLU_083987_3_3_9"/>
<dbReference type="Proteomes" id="UP000002156">
    <property type="component" value="Chromosome"/>
</dbReference>
<dbReference type="GO" id="GO:0022625">
    <property type="term" value="C:cytosolic large ribosomal subunit"/>
    <property type="evidence" value="ECO:0007669"/>
    <property type="project" value="TreeGrafter"/>
</dbReference>
<dbReference type="GO" id="GO:0019843">
    <property type="term" value="F:rRNA binding"/>
    <property type="evidence" value="ECO:0007669"/>
    <property type="project" value="UniProtKB-UniRule"/>
</dbReference>
<dbReference type="GO" id="GO:0003735">
    <property type="term" value="F:structural constituent of ribosome"/>
    <property type="evidence" value="ECO:0007669"/>
    <property type="project" value="InterPro"/>
</dbReference>
<dbReference type="GO" id="GO:0006412">
    <property type="term" value="P:translation"/>
    <property type="evidence" value="ECO:0007669"/>
    <property type="project" value="UniProtKB-UniRule"/>
</dbReference>
<dbReference type="CDD" id="cd00336">
    <property type="entry name" value="Ribosomal_L22"/>
    <property type="match status" value="1"/>
</dbReference>
<dbReference type="FunFam" id="3.90.470.10:FF:000011">
    <property type="entry name" value="50S ribosomal protein L22"/>
    <property type="match status" value="1"/>
</dbReference>
<dbReference type="Gene3D" id="3.90.470.10">
    <property type="entry name" value="Ribosomal protein L22/L17"/>
    <property type="match status" value="1"/>
</dbReference>
<dbReference type="HAMAP" id="MF_01331_B">
    <property type="entry name" value="Ribosomal_uL22_B"/>
    <property type="match status" value="1"/>
</dbReference>
<dbReference type="InterPro" id="IPR001063">
    <property type="entry name" value="Ribosomal_uL22"/>
</dbReference>
<dbReference type="InterPro" id="IPR005727">
    <property type="entry name" value="Ribosomal_uL22_bac/chlpt-type"/>
</dbReference>
<dbReference type="InterPro" id="IPR047867">
    <property type="entry name" value="Ribosomal_uL22_bac/org-type"/>
</dbReference>
<dbReference type="InterPro" id="IPR018260">
    <property type="entry name" value="Ribosomal_uL22_CS"/>
</dbReference>
<dbReference type="InterPro" id="IPR036394">
    <property type="entry name" value="Ribosomal_uL22_sf"/>
</dbReference>
<dbReference type="NCBIfam" id="TIGR01044">
    <property type="entry name" value="rplV_bact"/>
    <property type="match status" value="1"/>
</dbReference>
<dbReference type="PANTHER" id="PTHR13501">
    <property type="entry name" value="CHLOROPLAST 50S RIBOSOMAL PROTEIN L22-RELATED"/>
    <property type="match status" value="1"/>
</dbReference>
<dbReference type="PANTHER" id="PTHR13501:SF8">
    <property type="entry name" value="LARGE RIBOSOMAL SUBUNIT PROTEIN UL22M"/>
    <property type="match status" value="1"/>
</dbReference>
<dbReference type="Pfam" id="PF00237">
    <property type="entry name" value="Ribosomal_L22"/>
    <property type="match status" value="1"/>
</dbReference>
<dbReference type="SUPFAM" id="SSF54843">
    <property type="entry name" value="Ribosomal protein L22"/>
    <property type="match status" value="1"/>
</dbReference>
<dbReference type="PROSITE" id="PS00464">
    <property type="entry name" value="RIBOSOMAL_L22"/>
    <property type="match status" value="1"/>
</dbReference>
<name>RL22_THEP3</name>